<keyword id="KW-0413">Isomerase</keyword>
<keyword id="KW-0819">tRNA processing</keyword>
<dbReference type="EC" id="5.4.99.12" evidence="1"/>
<dbReference type="EMBL" id="CP000967">
    <property type="protein sequence ID" value="ACD60114.1"/>
    <property type="molecule type" value="Genomic_DNA"/>
</dbReference>
<dbReference type="RefSeq" id="WP_011259765.1">
    <property type="nucleotide sequence ID" value="NC_010717.2"/>
</dbReference>
<dbReference type="SMR" id="B2SVP0"/>
<dbReference type="KEGG" id="xop:PXO_01267"/>
<dbReference type="eggNOG" id="COG0101">
    <property type="taxonomic scope" value="Bacteria"/>
</dbReference>
<dbReference type="HOGENOM" id="CLU_014673_0_2_6"/>
<dbReference type="Proteomes" id="UP000001740">
    <property type="component" value="Chromosome"/>
</dbReference>
<dbReference type="GO" id="GO:0003723">
    <property type="term" value="F:RNA binding"/>
    <property type="evidence" value="ECO:0007669"/>
    <property type="project" value="InterPro"/>
</dbReference>
<dbReference type="GO" id="GO:0160147">
    <property type="term" value="F:tRNA pseudouridine(38-40) synthase activity"/>
    <property type="evidence" value="ECO:0007669"/>
    <property type="project" value="UniProtKB-EC"/>
</dbReference>
<dbReference type="GO" id="GO:0031119">
    <property type="term" value="P:tRNA pseudouridine synthesis"/>
    <property type="evidence" value="ECO:0007669"/>
    <property type="project" value="UniProtKB-UniRule"/>
</dbReference>
<dbReference type="CDD" id="cd02570">
    <property type="entry name" value="PseudoU_synth_EcTruA"/>
    <property type="match status" value="1"/>
</dbReference>
<dbReference type="FunFam" id="3.30.70.580:FF:000001">
    <property type="entry name" value="tRNA pseudouridine synthase A"/>
    <property type="match status" value="1"/>
</dbReference>
<dbReference type="FunFam" id="3.30.70.660:FF:000008">
    <property type="entry name" value="tRNA pseudouridine synthase A"/>
    <property type="match status" value="1"/>
</dbReference>
<dbReference type="Gene3D" id="3.30.70.660">
    <property type="entry name" value="Pseudouridine synthase I, catalytic domain, C-terminal subdomain"/>
    <property type="match status" value="1"/>
</dbReference>
<dbReference type="Gene3D" id="3.30.70.580">
    <property type="entry name" value="Pseudouridine synthase I, catalytic domain, N-terminal subdomain"/>
    <property type="match status" value="1"/>
</dbReference>
<dbReference type="HAMAP" id="MF_00171">
    <property type="entry name" value="TruA"/>
    <property type="match status" value="1"/>
</dbReference>
<dbReference type="InterPro" id="IPR020103">
    <property type="entry name" value="PsdUridine_synth_cat_dom_sf"/>
</dbReference>
<dbReference type="InterPro" id="IPR001406">
    <property type="entry name" value="PsdUridine_synth_TruA"/>
</dbReference>
<dbReference type="InterPro" id="IPR020097">
    <property type="entry name" value="PsdUridine_synth_TruA_a/b_dom"/>
</dbReference>
<dbReference type="InterPro" id="IPR020095">
    <property type="entry name" value="PsdUridine_synth_TruA_C"/>
</dbReference>
<dbReference type="InterPro" id="IPR020094">
    <property type="entry name" value="TruA/RsuA/RluB/E/F_N"/>
</dbReference>
<dbReference type="NCBIfam" id="TIGR00071">
    <property type="entry name" value="hisT_truA"/>
    <property type="match status" value="1"/>
</dbReference>
<dbReference type="PANTHER" id="PTHR11142">
    <property type="entry name" value="PSEUDOURIDYLATE SYNTHASE"/>
    <property type="match status" value="1"/>
</dbReference>
<dbReference type="PANTHER" id="PTHR11142:SF0">
    <property type="entry name" value="TRNA PSEUDOURIDINE SYNTHASE-LIKE 1"/>
    <property type="match status" value="1"/>
</dbReference>
<dbReference type="Pfam" id="PF01416">
    <property type="entry name" value="PseudoU_synth_1"/>
    <property type="match status" value="2"/>
</dbReference>
<dbReference type="PIRSF" id="PIRSF001430">
    <property type="entry name" value="tRNA_psdUrid_synth"/>
    <property type="match status" value="1"/>
</dbReference>
<dbReference type="SUPFAM" id="SSF55120">
    <property type="entry name" value="Pseudouridine synthase"/>
    <property type="match status" value="1"/>
</dbReference>
<gene>
    <name evidence="1" type="primary">truA</name>
    <name type="ordered locus">PXO_01267</name>
</gene>
<proteinExistence type="inferred from homology"/>
<reference key="1">
    <citation type="journal article" date="2008" name="BMC Genomics">
        <title>Genome sequence and rapid evolution of the rice pathogen Xanthomonas oryzae pv. oryzae PXO99A.</title>
        <authorList>
            <person name="Salzberg S.L."/>
            <person name="Sommer D.D."/>
            <person name="Schatz M.C."/>
            <person name="Phillippy A.M."/>
            <person name="Rabinowicz P.D."/>
            <person name="Tsuge S."/>
            <person name="Furutani A."/>
            <person name="Ochiai H."/>
            <person name="Delcher A.L."/>
            <person name="Kelley D."/>
            <person name="Madupu R."/>
            <person name="Puiu D."/>
            <person name="Radune D."/>
            <person name="Shumway M."/>
            <person name="Trapnell C."/>
            <person name="Aparna G."/>
            <person name="Jha G."/>
            <person name="Pandey A."/>
            <person name="Patil P.B."/>
            <person name="Ishihara H."/>
            <person name="Meyer D.F."/>
            <person name="Szurek B."/>
            <person name="Verdier V."/>
            <person name="Koebnik R."/>
            <person name="Dow J.M."/>
            <person name="Ryan R.P."/>
            <person name="Hirata H."/>
            <person name="Tsuyumu S."/>
            <person name="Won Lee S."/>
            <person name="Seo Y.-S."/>
            <person name="Sriariyanum M."/>
            <person name="Ronald P.C."/>
            <person name="Sonti R.V."/>
            <person name="Van Sluys M.-A."/>
            <person name="Leach J.E."/>
            <person name="White F.F."/>
            <person name="Bogdanove A.J."/>
        </authorList>
    </citation>
    <scope>NUCLEOTIDE SEQUENCE [LARGE SCALE GENOMIC DNA]</scope>
    <source>
        <strain>PXO99A</strain>
    </source>
</reference>
<evidence type="ECO:0000255" key="1">
    <source>
        <dbReference type="HAMAP-Rule" id="MF_00171"/>
    </source>
</evidence>
<sequence length="257" mass="28305">MRYALGVEYDGSEFQGWQQLGEHGGPSVQASLQAALSSVADAPVQVVCAGRTDAGVHGECQVVHFDSDAHREPRGWMLGTTARLPPSIAVRWCVPAAADFHARFSARARRYRYRLLNRQIRPALYRQTLSWERRPLDADAMHVAAQALLGENDFSAFRSVQCQALHARRNLQAIHVQRIGEVVEVQVQANAFLHHMVRNIVGSLILVGTGEQPADWIATLLAGRDRTVAGPTAPPQGLVFIGPLYPAEWHLPAEVTQ</sequence>
<name>TRUA_XANOP</name>
<protein>
    <recommendedName>
        <fullName evidence="1">tRNA pseudouridine synthase A</fullName>
        <ecNumber evidence="1">5.4.99.12</ecNumber>
    </recommendedName>
    <alternativeName>
        <fullName evidence="1">tRNA pseudouridine(38-40) synthase</fullName>
    </alternativeName>
    <alternativeName>
        <fullName evidence="1">tRNA pseudouridylate synthase I</fullName>
    </alternativeName>
    <alternativeName>
        <fullName evidence="1">tRNA-uridine isomerase I</fullName>
    </alternativeName>
</protein>
<organism>
    <name type="scientific">Xanthomonas oryzae pv. oryzae (strain PXO99A)</name>
    <dbReference type="NCBI Taxonomy" id="360094"/>
    <lineage>
        <taxon>Bacteria</taxon>
        <taxon>Pseudomonadati</taxon>
        <taxon>Pseudomonadota</taxon>
        <taxon>Gammaproteobacteria</taxon>
        <taxon>Lysobacterales</taxon>
        <taxon>Lysobacteraceae</taxon>
        <taxon>Xanthomonas</taxon>
    </lineage>
</organism>
<accession>B2SVP0</accession>
<comment type="function">
    <text evidence="1">Formation of pseudouridine at positions 38, 39 and 40 in the anticodon stem and loop of transfer RNAs.</text>
</comment>
<comment type="catalytic activity">
    <reaction evidence="1">
        <text>uridine(38/39/40) in tRNA = pseudouridine(38/39/40) in tRNA</text>
        <dbReference type="Rhea" id="RHEA:22376"/>
        <dbReference type="Rhea" id="RHEA-COMP:10085"/>
        <dbReference type="Rhea" id="RHEA-COMP:10087"/>
        <dbReference type="ChEBI" id="CHEBI:65314"/>
        <dbReference type="ChEBI" id="CHEBI:65315"/>
        <dbReference type="EC" id="5.4.99.12"/>
    </reaction>
</comment>
<comment type="subunit">
    <text evidence="1">Homodimer.</text>
</comment>
<comment type="similarity">
    <text evidence="1">Belongs to the tRNA pseudouridine synthase TruA family.</text>
</comment>
<feature type="chain" id="PRO_1000097807" description="tRNA pseudouridine synthase A">
    <location>
        <begin position="1"/>
        <end position="257"/>
    </location>
</feature>
<feature type="active site" description="Nucleophile" evidence="1">
    <location>
        <position position="53"/>
    </location>
</feature>
<feature type="binding site" evidence="1">
    <location>
        <position position="111"/>
    </location>
    <ligand>
        <name>substrate</name>
    </ligand>
</feature>